<name>IFT57_DANRE</name>
<protein>
    <recommendedName>
        <fullName>Intraflagellar transport protein 57 homolog</fullName>
    </recommendedName>
</protein>
<organism>
    <name type="scientific">Danio rerio</name>
    <name type="common">Zebrafish</name>
    <name type="synonym">Brachydanio rerio</name>
    <dbReference type="NCBI Taxonomy" id="7955"/>
    <lineage>
        <taxon>Eukaryota</taxon>
        <taxon>Metazoa</taxon>
        <taxon>Chordata</taxon>
        <taxon>Craniata</taxon>
        <taxon>Vertebrata</taxon>
        <taxon>Euteleostomi</taxon>
        <taxon>Actinopterygii</taxon>
        <taxon>Neopterygii</taxon>
        <taxon>Teleostei</taxon>
        <taxon>Ostariophysi</taxon>
        <taxon>Cypriniformes</taxon>
        <taxon>Danionidae</taxon>
        <taxon>Danioninae</taxon>
        <taxon>Danio</taxon>
    </lineage>
</organism>
<comment type="function">
    <text evidence="3 4 5 6">Required for the formation of cilia. Essential for differentiation and survival of sensory neurons. May also have pro-apoptotic function.</text>
</comment>
<comment type="subcellular location">
    <subcellularLocation>
        <location evidence="1">Cytoplasm</location>
        <location evidence="1">Cytoskeleton</location>
        <location evidence="1">Cilium basal body</location>
    </subcellularLocation>
</comment>
<comment type="disruption phenotype">
    <text evidence="3 4 5">Fishes show ciliary defects. In retina, cilia are generated but not maintained, producing the absence of photoreceptor outer segments. A loss of cilia also occurs in auditory hair cells and olfactory sensory neurons. In all 3 sense organs, cilia defects are followed by degeneration of sensory cells.</text>
</comment>
<comment type="similarity">
    <text evidence="7">Belongs to the IFT57 family.</text>
</comment>
<comment type="sequence caution" evidence="7">
    <conflict type="erroneous initiation">
        <sequence resource="EMBL-CDS" id="AAT27467"/>
    </conflict>
</comment>
<dbReference type="EMBL" id="AY618924">
    <property type="protein sequence ID" value="AAT39120.1"/>
    <property type="molecule type" value="mRNA"/>
</dbReference>
<dbReference type="EMBL" id="AY956331">
    <property type="protein sequence ID" value="AAX56964.1"/>
    <property type="molecule type" value="mRNA"/>
</dbReference>
<dbReference type="EMBL" id="BC095565">
    <property type="protein sequence ID" value="AAH95565.1"/>
    <property type="molecule type" value="mRNA"/>
</dbReference>
<dbReference type="EMBL" id="AY600454">
    <property type="protein sequence ID" value="AAT27467.1"/>
    <property type="status" value="ALT_INIT"/>
    <property type="molecule type" value="mRNA"/>
</dbReference>
<dbReference type="RefSeq" id="NP_001001832.1">
    <property type="nucleotide sequence ID" value="NM_001001832.1"/>
</dbReference>
<dbReference type="SMR" id="Q6IVW0"/>
<dbReference type="FunCoup" id="Q6IVW0">
    <property type="interactions" value="487"/>
</dbReference>
<dbReference type="STRING" id="7955.ENSDARP00000013774"/>
<dbReference type="PaxDb" id="7955-ENSDARP00000013774"/>
<dbReference type="Ensembl" id="ENSDART00000012919">
    <property type="protein sequence ID" value="ENSDARP00000013774"/>
    <property type="gene ID" value="ENSDARG00000021022"/>
</dbReference>
<dbReference type="GeneID" id="414929"/>
<dbReference type="KEGG" id="dre:414929"/>
<dbReference type="AGR" id="ZFIN:ZDB-GENE-040614-1"/>
<dbReference type="CTD" id="55081"/>
<dbReference type="ZFIN" id="ZDB-GENE-040614-1">
    <property type="gene designation" value="ift57"/>
</dbReference>
<dbReference type="eggNOG" id="KOG0972">
    <property type="taxonomic scope" value="Eukaryota"/>
</dbReference>
<dbReference type="HOGENOM" id="CLU_039132_0_0_1"/>
<dbReference type="InParanoid" id="Q6IVW0"/>
<dbReference type="OMA" id="VHAHDQD"/>
<dbReference type="OrthoDB" id="423881at2759"/>
<dbReference type="PhylomeDB" id="Q6IVW0"/>
<dbReference type="TreeFam" id="TF106156"/>
<dbReference type="Reactome" id="R-DRE-5610787">
    <property type="pathway name" value="Hedgehog 'off' state"/>
</dbReference>
<dbReference type="PRO" id="PR:Q6IVW0"/>
<dbReference type="Proteomes" id="UP000000437">
    <property type="component" value="Chromosome 2"/>
</dbReference>
<dbReference type="Bgee" id="ENSDARG00000021022">
    <property type="expression patterns" value="Expressed in testis and 24 other cell types or tissues"/>
</dbReference>
<dbReference type="GO" id="GO:0036064">
    <property type="term" value="C:ciliary basal body"/>
    <property type="evidence" value="ECO:0000250"/>
    <property type="project" value="UniProtKB"/>
</dbReference>
<dbReference type="GO" id="GO:0005929">
    <property type="term" value="C:cilium"/>
    <property type="evidence" value="ECO:0000318"/>
    <property type="project" value="GO_Central"/>
</dbReference>
<dbReference type="GO" id="GO:0005576">
    <property type="term" value="C:extracellular region"/>
    <property type="evidence" value="ECO:0007669"/>
    <property type="project" value="GOC"/>
</dbReference>
<dbReference type="GO" id="GO:0005794">
    <property type="term" value="C:Golgi apparatus"/>
    <property type="evidence" value="ECO:0000318"/>
    <property type="project" value="GO_Central"/>
</dbReference>
<dbReference type="GO" id="GO:0030992">
    <property type="term" value="C:intraciliary transport particle B"/>
    <property type="evidence" value="ECO:0000250"/>
    <property type="project" value="UniProtKB"/>
</dbReference>
<dbReference type="GO" id="GO:0005815">
    <property type="term" value="C:microtubule organizing center"/>
    <property type="evidence" value="ECO:0000318"/>
    <property type="project" value="GO_Central"/>
</dbReference>
<dbReference type="GO" id="GO:0006915">
    <property type="term" value="P:apoptotic process"/>
    <property type="evidence" value="ECO:0007669"/>
    <property type="project" value="UniProtKB-KW"/>
</dbReference>
<dbReference type="GO" id="GO:0060271">
    <property type="term" value="P:cilium assembly"/>
    <property type="evidence" value="ECO:0000315"/>
    <property type="project" value="ZFIN"/>
</dbReference>
<dbReference type="GO" id="GO:0007368">
    <property type="term" value="P:determination of left/right symmetry"/>
    <property type="evidence" value="ECO:0000316"/>
    <property type="project" value="ZFIN"/>
</dbReference>
<dbReference type="GO" id="GO:0003351">
    <property type="term" value="P:epithelial cilium movement involved in extracellular fluid movement"/>
    <property type="evidence" value="ECO:0000315"/>
    <property type="project" value="ZFIN"/>
</dbReference>
<dbReference type="GO" id="GO:0042462">
    <property type="term" value="P:eye photoreceptor cell development"/>
    <property type="evidence" value="ECO:0000315"/>
    <property type="project" value="ZFIN"/>
</dbReference>
<dbReference type="GO" id="GO:0042073">
    <property type="term" value="P:intraciliary transport"/>
    <property type="evidence" value="ECO:0000315"/>
    <property type="project" value="ZFIN"/>
</dbReference>
<dbReference type="GO" id="GO:1905515">
    <property type="term" value="P:non-motile cilium assembly"/>
    <property type="evidence" value="ECO:0000315"/>
    <property type="project" value="ZFIN"/>
</dbReference>
<dbReference type="GO" id="GO:0045494">
    <property type="term" value="P:photoreceptor cell maintenance"/>
    <property type="evidence" value="ECO:0000315"/>
    <property type="project" value="ZFIN"/>
</dbReference>
<dbReference type="GO" id="GO:0032006">
    <property type="term" value="P:regulation of TOR signaling"/>
    <property type="evidence" value="ECO:0000315"/>
    <property type="project" value="ZFIN"/>
</dbReference>
<dbReference type="InterPro" id="IPR019530">
    <property type="entry name" value="Intra-flagellar_transport_57"/>
</dbReference>
<dbReference type="PANTHER" id="PTHR16011">
    <property type="entry name" value="IFT57/HIPPI"/>
    <property type="match status" value="1"/>
</dbReference>
<dbReference type="PANTHER" id="PTHR16011:SF0">
    <property type="entry name" value="INTRAFLAGELLAR TRANSPORT PROTEIN 57 HOMOLOG"/>
    <property type="match status" value="1"/>
</dbReference>
<dbReference type="Pfam" id="PF10498">
    <property type="entry name" value="IFT57"/>
    <property type="match status" value="1"/>
</dbReference>
<keyword id="KW-0053">Apoptosis</keyword>
<keyword id="KW-0966">Cell projection</keyword>
<keyword id="KW-0969">Cilium</keyword>
<keyword id="KW-0175">Coiled coil</keyword>
<keyword id="KW-0963">Cytoplasm</keyword>
<keyword id="KW-0206">Cytoskeleton</keyword>
<keyword id="KW-1185">Reference proteome</keyword>
<reference key="1">
    <citation type="journal article" date="2004" name="Development">
        <title>A genetic screen in zebrafish identifies cilia genes as a principal cause of cystic kidney.</title>
        <authorList>
            <person name="Sun Z."/>
            <person name="Amsterdam A."/>
            <person name="Pazour G.J."/>
            <person name="Cole D.G."/>
            <person name="Miller M.S."/>
            <person name="Hopkins N."/>
        </authorList>
    </citation>
    <scope>NUCLEOTIDE SEQUENCE [MRNA]</scope>
    <scope>FUNCTION</scope>
    <scope>DISRUPTION PHENOTYPE</scope>
</reference>
<reference key="2">
    <citation type="journal article" date="2005" name="Development">
        <title>Cilia-driven fluid flow in the zebrafish pronephros, brain and Kupffer's vesicle is required for normal organogenesis.</title>
        <authorList>
            <person name="Kramer-Zucker A.G."/>
            <person name="Olale F."/>
            <person name="Haycraft C.J."/>
            <person name="Yoder B.K."/>
            <person name="Schier A.F."/>
            <person name="Drummond I.A."/>
        </authorList>
    </citation>
    <scope>NUCLEOTIDE SEQUENCE [MRNA]</scope>
    <scope>FUNCTION</scope>
    <scope>DISRUPTION PHENOTYPE</scope>
</reference>
<reference key="3">
    <citation type="submission" date="2005-05" db="EMBL/GenBank/DDBJ databases">
        <authorList>
            <consortium name="NIH - Zebrafish Gene Collection (ZGC) project"/>
        </authorList>
    </citation>
    <scope>NUCLEOTIDE SEQUENCE [LARGE SCALE MRNA]</scope>
    <source>
        <tissue>Testis</tissue>
    </source>
</reference>
<reference key="4">
    <citation type="journal article" date="2004" name="Neuron">
        <title>Intraflagellar transport genes are essential for differentiation and survival of vertebrate sensory neurons.</title>
        <authorList>
            <person name="Tsujikawa M."/>
            <person name="Malicki J."/>
        </authorList>
    </citation>
    <scope>NUCLEOTIDE SEQUENCE [MRNA] OF 9-407</scope>
    <scope>FUNCTION</scope>
    <scope>DISRUPTION PHENOTYPE</scope>
</reference>
<reference key="5">
    <citation type="journal article" date="2007" name="Proc. Natl. Acad. Sci. U.S.A.">
        <title>A role for the inositol kinase Ipk1 in ciliary beating and length maintenance.</title>
        <authorList>
            <person name="Sarmah B."/>
            <person name="Winfrey V.P."/>
            <person name="Olson G.E."/>
            <person name="Appel B."/>
            <person name="Wente S.R."/>
        </authorList>
    </citation>
    <scope>FUNCTION</scope>
</reference>
<sequence length="407" mass="46593">MAEEEERGPGSVYQMFVLMEDLLDKLKVLDYEQHVLDKHNIKPLSRHYFVSSPHVLSNPGEQFYMFSVIAAWLITLCGRPFDTPQEYDDPNATVSNILSELRTLGGQVDFPPSKLKTGSGEHVCYVLDQLVEKALKSKGFAWNRPLYPSVEVEDECVQEDDAELTLSKVEEEMTQEDEEYEEEDGLDLDALKTRTNGELSGSRPAVVLESDVDAAEWNLEVERVLPQLKVTIRTDNKDWRIHLDQMHQHQDGINTSLQDAKGCLFKLREDISKTLEKVSSREKYLNTQLEHLISEYRQAQSQLNKVKELYQQASGGVTERTRILAEISEELDKVKQEMEEKGSSMSDGAPVVKIRQSLTKLKQEIEQMDVRMGVVEHTLLQAKLREKNNMTRDMHATHLLEPNAQAY</sequence>
<feature type="chain" id="PRO_0000328886" description="Intraflagellar transport protein 57 homolog">
    <location>
        <begin position="1"/>
        <end position="407"/>
    </location>
</feature>
<feature type="region of interest" description="pDED">
    <location>
        <begin position="313"/>
        <end position="404"/>
    </location>
</feature>
<feature type="coiled-coil region" evidence="2">
    <location>
        <begin position="158"/>
        <end position="186"/>
    </location>
</feature>
<feature type="coiled-coil region" evidence="2">
    <location>
        <begin position="283"/>
        <end position="373"/>
    </location>
</feature>
<feature type="sequence conflict" description="In Ref. 3; AAH95565 and 4; AAT27467." evidence="7" ref="3 4">
    <original>A</original>
    <variation>S</variation>
    <location>
        <position position="70"/>
    </location>
</feature>
<feature type="sequence conflict" description="In Ref. 3; AAH95565 and 4; AAT27467." evidence="7" ref="3 4">
    <original>D</original>
    <variation>E</variation>
    <location>
        <position position="189"/>
    </location>
</feature>
<feature type="sequence conflict" description="In Ref. 2; AAX56964." evidence="7" ref="2">
    <original>A</original>
    <variation>T</variation>
    <location>
        <position position="214"/>
    </location>
</feature>
<gene>
    <name type="primary">ift57</name>
</gene>
<accession>Q6IVW0</accession>
<accession>Q502T5</accession>
<accession>Q56HB0</accession>
<accession>Q6J504</accession>
<proteinExistence type="evidence at transcript level"/>
<evidence type="ECO:0000250" key="1"/>
<evidence type="ECO:0000255" key="2"/>
<evidence type="ECO:0000269" key="3">
    <source>
    </source>
</evidence>
<evidence type="ECO:0000269" key="4">
    <source>
    </source>
</evidence>
<evidence type="ECO:0000269" key="5">
    <source>
    </source>
</evidence>
<evidence type="ECO:0000269" key="6">
    <source>
    </source>
</evidence>
<evidence type="ECO:0000305" key="7"/>